<gene>
    <name evidence="1" type="primary">murI</name>
    <name type="ordered locus">slr1746</name>
</gene>
<sequence>MREPQRSRIGVFDSGVGGLTVLRELYRQLPKESILYFGDTARLPYGKRSPQVILQYVREILTWMAAEEVKMVIMACNTSSALALETVQQEFNMPILGVILPGARAAVRQGRRIGVISTPATAASNAYRHAIHEITPDALVWQMACPEFVPLIEQNRLHDPYTLEVAKGYLQPLLDADIDTLVFGCTHYRHLTPVFQQILPSHIRLVDPASHVVKAARQELEVMGLRNSEMSIATRFTVSGCPQQFAELSHQWLGFTPMVEKISLPCLSSICPQPLEIRE</sequence>
<comment type="function">
    <text evidence="1">Provides the (R)-glutamate required for cell wall biosynthesis.</text>
</comment>
<comment type="catalytic activity">
    <reaction evidence="1">
        <text>L-glutamate = D-glutamate</text>
        <dbReference type="Rhea" id="RHEA:12813"/>
        <dbReference type="ChEBI" id="CHEBI:29985"/>
        <dbReference type="ChEBI" id="CHEBI:29986"/>
        <dbReference type="EC" id="5.1.1.3"/>
    </reaction>
</comment>
<comment type="pathway">
    <text evidence="1">Cell wall biogenesis; peptidoglycan biosynthesis.</text>
</comment>
<comment type="similarity">
    <text evidence="1">Belongs to the aspartate/glutamate racemases family.</text>
</comment>
<dbReference type="EC" id="5.1.1.3" evidence="1"/>
<dbReference type="EMBL" id="BA000022">
    <property type="protein sequence ID" value="BAA17785.1"/>
    <property type="molecule type" value="Genomic_DNA"/>
</dbReference>
<dbReference type="PIR" id="S74824">
    <property type="entry name" value="S74824"/>
</dbReference>
<dbReference type="SMR" id="P73737"/>
<dbReference type="FunCoup" id="P73737">
    <property type="interactions" value="226"/>
</dbReference>
<dbReference type="STRING" id="1148.gene:10498653"/>
<dbReference type="PaxDb" id="1148-1652867"/>
<dbReference type="EnsemblBacteria" id="BAA17785">
    <property type="protein sequence ID" value="BAA17785"/>
    <property type="gene ID" value="BAA17785"/>
</dbReference>
<dbReference type="KEGG" id="syn:slr1746"/>
<dbReference type="eggNOG" id="COG0796">
    <property type="taxonomic scope" value="Bacteria"/>
</dbReference>
<dbReference type="InParanoid" id="P73737"/>
<dbReference type="PhylomeDB" id="P73737"/>
<dbReference type="UniPathway" id="UPA00219"/>
<dbReference type="Proteomes" id="UP000001425">
    <property type="component" value="Chromosome"/>
</dbReference>
<dbReference type="GO" id="GO:0008881">
    <property type="term" value="F:glutamate racemase activity"/>
    <property type="evidence" value="ECO:0000318"/>
    <property type="project" value="GO_Central"/>
</dbReference>
<dbReference type="GO" id="GO:0071555">
    <property type="term" value="P:cell wall organization"/>
    <property type="evidence" value="ECO:0007669"/>
    <property type="project" value="UniProtKB-KW"/>
</dbReference>
<dbReference type="GO" id="GO:0009252">
    <property type="term" value="P:peptidoglycan biosynthetic process"/>
    <property type="evidence" value="ECO:0000318"/>
    <property type="project" value="GO_Central"/>
</dbReference>
<dbReference type="GO" id="GO:0008360">
    <property type="term" value="P:regulation of cell shape"/>
    <property type="evidence" value="ECO:0007669"/>
    <property type="project" value="UniProtKB-KW"/>
</dbReference>
<dbReference type="FunFam" id="3.40.50.1860:FF:000002">
    <property type="entry name" value="Glutamate racemase"/>
    <property type="match status" value="1"/>
</dbReference>
<dbReference type="Gene3D" id="3.40.50.1860">
    <property type="match status" value="2"/>
</dbReference>
<dbReference type="HAMAP" id="MF_00258">
    <property type="entry name" value="Glu_racemase"/>
    <property type="match status" value="1"/>
</dbReference>
<dbReference type="InterPro" id="IPR015942">
    <property type="entry name" value="Asp/Glu/hydantoin_racemase"/>
</dbReference>
<dbReference type="InterPro" id="IPR001920">
    <property type="entry name" value="Asp/Glu_race"/>
</dbReference>
<dbReference type="InterPro" id="IPR018187">
    <property type="entry name" value="Asp/Glu_racemase_AS_1"/>
</dbReference>
<dbReference type="InterPro" id="IPR033134">
    <property type="entry name" value="Asp/Glu_racemase_AS_2"/>
</dbReference>
<dbReference type="InterPro" id="IPR004391">
    <property type="entry name" value="Glu_race"/>
</dbReference>
<dbReference type="NCBIfam" id="TIGR00067">
    <property type="entry name" value="glut_race"/>
    <property type="match status" value="1"/>
</dbReference>
<dbReference type="PANTHER" id="PTHR21198">
    <property type="entry name" value="GLUTAMATE RACEMASE"/>
    <property type="match status" value="1"/>
</dbReference>
<dbReference type="PANTHER" id="PTHR21198:SF2">
    <property type="entry name" value="GLUTAMATE RACEMASE"/>
    <property type="match status" value="1"/>
</dbReference>
<dbReference type="Pfam" id="PF01177">
    <property type="entry name" value="Asp_Glu_race"/>
    <property type="match status" value="1"/>
</dbReference>
<dbReference type="SUPFAM" id="SSF53681">
    <property type="entry name" value="Aspartate/glutamate racemase"/>
    <property type="match status" value="2"/>
</dbReference>
<dbReference type="PROSITE" id="PS00923">
    <property type="entry name" value="ASP_GLU_RACEMASE_1"/>
    <property type="match status" value="1"/>
</dbReference>
<dbReference type="PROSITE" id="PS00924">
    <property type="entry name" value="ASP_GLU_RACEMASE_2"/>
    <property type="match status" value="1"/>
</dbReference>
<accession>P73737</accession>
<proteinExistence type="inferred from homology"/>
<feature type="chain" id="PRO_0000095525" description="Glutamate racemase">
    <location>
        <begin position="1"/>
        <end position="279"/>
    </location>
</feature>
<feature type="active site" description="Proton donor/acceptor" evidence="1">
    <location>
        <position position="76"/>
    </location>
</feature>
<feature type="active site" description="Proton donor/acceptor" evidence="1">
    <location>
        <position position="185"/>
    </location>
</feature>
<feature type="binding site" evidence="1">
    <location>
        <begin position="13"/>
        <end position="14"/>
    </location>
    <ligand>
        <name>substrate</name>
    </ligand>
</feature>
<feature type="binding site" evidence="1">
    <location>
        <begin position="45"/>
        <end position="46"/>
    </location>
    <ligand>
        <name>substrate</name>
    </ligand>
</feature>
<feature type="binding site" evidence="1">
    <location>
        <begin position="77"/>
        <end position="78"/>
    </location>
    <ligand>
        <name>substrate</name>
    </ligand>
</feature>
<feature type="binding site" evidence="1">
    <location>
        <begin position="186"/>
        <end position="187"/>
    </location>
    <ligand>
        <name>substrate</name>
    </ligand>
</feature>
<name>MURI_SYNY3</name>
<evidence type="ECO:0000255" key="1">
    <source>
        <dbReference type="HAMAP-Rule" id="MF_00258"/>
    </source>
</evidence>
<protein>
    <recommendedName>
        <fullName evidence="1">Glutamate racemase</fullName>
        <ecNumber evidence="1">5.1.1.3</ecNumber>
    </recommendedName>
</protein>
<keyword id="KW-0133">Cell shape</keyword>
<keyword id="KW-0961">Cell wall biogenesis/degradation</keyword>
<keyword id="KW-0413">Isomerase</keyword>
<keyword id="KW-0573">Peptidoglycan synthesis</keyword>
<keyword id="KW-1185">Reference proteome</keyword>
<organism>
    <name type="scientific">Synechocystis sp. (strain ATCC 27184 / PCC 6803 / Kazusa)</name>
    <dbReference type="NCBI Taxonomy" id="1111708"/>
    <lineage>
        <taxon>Bacteria</taxon>
        <taxon>Bacillati</taxon>
        <taxon>Cyanobacteriota</taxon>
        <taxon>Cyanophyceae</taxon>
        <taxon>Synechococcales</taxon>
        <taxon>Merismopediaceae</taxon>
        <taxon>Synechocystis</taxon>
    </lineage>
</organism>
<reference key="1">
    <citation type="journal article" date="1996" name="DNA Res.">
        <title>Sequence analysis of the genome of the unicellular cyanobacterium Synechocystis sp. strain PCC6803. II. Sequence determination of the entire genome and assignment of potential protein-coding regions.</title>
        <authorList>
            <person name="Kaneko T."/>
            <person name="Sato S."/>
            <person name="Kotani H."/>
            <person name="Tanaka A."/>
            <person name="Asamizu E."/>
            <person name="Nakamura Y."/>
            <person name="Miyajima N."/>
            <person name="Hirosawa M."/>
            <person name="Sugiura M."/>
            <person name="Sasamoto S."/>
            <person name="Kimura T."/>
            <person name="Hosouchi T."/>
            <person name="Matsuno A."/>
            <person name="Muraki A."/>
            <person name="Nakazaki N."/>
            <person name="Naruo K."/>
            <person name="Okumura S."/>
            <person name="Shimpo S."/>
            <person name="Takeuchi C."/>
            <person name="Wada T."/>
            <person name="Watanabe A."/>
            <person name="Yamada M."/>
            <person name="Yasuda M."/>
            <person name="Tabata S."/>
        </authorList>
    </citation>
    <scope>NUCLEOTIDE SEQUENCE [LARGE SCALE GENOMIC DNA]</scope>
    <source>
        <strain>ATCC 27184 / PCC 6803 / Kazusa</strain>
    </source>
</reference>